<accession>P13585</accession>
<name>AT2A1_CHICK</name>
<dbReference type="EC" id="7.2.2.10" evidence="1"/>
<dbReference type="EMBL" id="M26064">
    <property type="protein sequence ID" value="AAA48609.1"/>
    <property type="molecule type" value="mRNA"/>
</dbReference>
<dbReference type="PIR" id="A32792">
    <property type="entry name" value="A32792"/>
</dbReference>
<dbReference type="RefSeq" id="NP_990850.1">
    <property type="nucleotide sequence ID" value="NM_205519.1"/>
</dbReference>
<dbReference type="SMR" id="P13585"/>
<dbReference type="FunCoup" id="P13585">
    <property type="interactions" value="115"/>
</dbReference>
<dbReference type="GeneID" id="396528"/>
<dbReference type="CTD" id="487"/>
<dbReference type="VEuPathDB" id="HostDB:geneid_396446"/>
<dbReference type="InParanoid" id="P13585"/>
<dbReference type="PhylomeDB" id="P13585"/>
<dbReference type="PRO" id="PR:P13585"/>
<dbReference type="Proteomes" id="UP000000539">
    <property type="component" value="Unassembled WGS sequence"/>
</dbReference>
<dbReference type="GO" id="GO:0005783">
    <property type="term" value="C:endoplasmic reticulum"/>
    <property type="evidence" value="ECO:0000250"/>
    <property type="project" value="UniProtKB"/>
</dbReference>
<dbReference type="GO" id="GO:0005789">
    <property type="term" value="C:endoplasmic reticulum membrane"/>
    <property type="evidence" value="ECO:0000250"/>
    <property type="project" value="UniProtKB"/>
</dbReference>
<dbReference type="GO" id="GO:0005793">
    <property type="term" value="C:endoplasmic reticulum-Golgi intermediate compartment"/>
    <property type="evidence" value="ECO:0000250"/>
    <property type="project" value="UniProtKB"/>
</dbReference>
<dbReference type="GO" id="GO:0031673">
    <property type="term" value="C:H zone"/>
    <property type="evidence" value="ECO:0000250"/>
    <property type="project" value="UniProtKB"/>
</dbReference>
<dbReference type="GO" id="GO:0031674">
    <property type="term" value="C:I band"/>
    <property type="evidence" value="ECO:0000250"/>
    <property type="project" value="UniProtKB"/>
</dbReference>
<dbReference type="GO" id="GO:0016020">
    <property type="term" value="C:membrane"/>
    <property type="evidence" value="ECO:0000250"/>
    <property type="project" value="UniProtKB"/>
</dbReference>
<dbReference type="GO" id="GO:0048471">
    <property type="term" value="C:perinuclear region of cytoplasm"/>
    <property type="evidence" value="ECO:0000250"/>
    <property type="project" value="UniProtKB"/>
</dbReference>
<dbReference type="GO" id="GO:0016529">
    <property type="term" value="C:sarcoplasmic reticulum"/>
    <property type="evidence" value="ECO:0000250"/>
    <property type="project" value="UniProtKB"/>
</dbReference>
<dbReference type="GO" id="GO:0033017">
    <property type="term" value="C:sarcoplasmic reticulum membrane"/>
    <property type="evidence" value="ECO:0000250"/>
    <property type="project" value="UniProtKB"/>
</dbReference>
<dbReference type="GO" id="GO:0005524">
    <property type="term" value="F:ATP binding"/>
    <property type="evidence" value="ECO:0000250"/>
    <property type="project" value="UniProtKB"/>
</dbReference>
<dbReference type="GO" id="GO:0016887">
    <property type="term" value="F:ATP hydrolysis activity"/>
    <property type="evidence" value="ECO:0007669"/>
    <property type="project" value="InterPro"/>
</dbReference>
<dbReference type="GO" id="GO:0005509">
    <property type="term" value="F:calcium ion binding"/>
    <property type="evidence" value="ECO:0000250"/>
    <property type="project" value="UniProtKB"/>
</dbReference>
<dbReference type="GO" id="GO:0005388">
    <property type="term" value="F:P-type calcium transporter activity"/>
    <property type="evidence" value="ECO:0000250"/>
    <property type="project" value="UniProtKB"/>
</dbReference>
<dbReference type="GO" id="GO:1990036">
    <property type="term" value="P:calcium ion import into sarcoplasmic reticulum"/>
    <property type="evidence" value="ECO:0000250"/>
    <property type="project" value="UniProtKB"/>
</dbReference>
<dbReference type="GO" id="GO:0070588">
    <property type="term" value="P:calcium ion transmembrane transport"/>
    <property type="evidence" value="ECO:0000318"/>
    <property type="project" value="GO_Central"/>
</dbReference>
<dbReference type="GO" id="GO:0006816">
    <property type="term" value="P:calcium ion transport"/>
    <property type="evidence" value="ECO:0000250"/>
    <property type="project" value="UniProtKB"/>
</dbReference>
<dbReference type="GO" id="GO:0006874">
    <property type="term" value="P:intracellular calcium ion homeostasis"/>
    <property type="evidence" value="ECO:0000318"/>
    <property type="project" value="GO_Central"/>
</dbReference>
<dbReference type="GO" id="GO:0045988">
    <property type="term" value="P:negative regulation of striated muscle contraction"/>
    <property type="evidence" value="ECO:0000250"/>
    <property type="project" value="UniProtKB"/>
</dbReference>
<dbReference type="GO" id="GO:0031448">
    <property type="term" value="P:positive regulation of fast-twitch skeletal muscle fiber contraction"/>
    <property type="evidence" value="ECO:0000250"/>
    <property type="project" value="UniProtKB"/>
</dbReference>
<dbReference type="GO" id="GO:0006942">
    <property type="term" value="P:regulation of striated muscle contraction"/>
    <property type="evidence" value="ECO:0000250"/>
    <property type="project" value="UniProtKB"/>
</dbReference>
<dbReference type="CDD" id="cd02083">
    <property type="entry name" value="P-type_ATPase_SERCA"/>
    <property type="match status" value="1"/>
</dbReference>
<dbReference type="FunFam" id="3.40.1110.10:FF:000003">
    <property type="entry name" value="Calcium-transporting ATPase"/>
    <property type="match status" value="1"/>
</dbReference>
<dbReference type="FunFam" id="3.40.50.1000:FF:000005">
    <property type="entry name" value="Calcium-transporting ATPase 1"/>
    <property type="match status" value="1"/>
</dbReference>
<dbReference type="FunFam" id="1.20.1110.10:FF:000065">
    <property type="entry name" value="Sarcoplasmic/endoplasmic reticulum calcium ATPase 1"/>
    <property type="match status" value="3"/>
</dbReference>
<dbReference type="FunFam" id="2.70.150.10:FF:000160">
    <property type="entry name" value="Sarcoplasmic/endoplasmic reticulum calcium ATPase 1"/>
    <property type="match status" value="2"/>
</dbReference>
<dbReference type="Gene3D" id="3.40.1110.10">
    <property type="entry name" value="Calcium-transporting ATPase, cytoplasmic domain N"/>
    <property type="match status" value="1"/>
</dbReference>
<dbReference type="Gene3D" id="2.70.150.10">
    <property type="entry name" value="Calcium-transporting ATPase, cytoplasmic transduction domain A"/>
    <property type="match status" value="1"/>
</dbReference>
<dbReference type="Gene3D" id="1.20.1110.10">
    <property type="entry name" value="Calcium-transporting ATPase, transmembrane domain"/>
    <property type="match status" value="1"/>
</dbReference>
<dbReference type="Gene3D" id="3.40.50.1000">
    <property type="entry name" value="HAD superfamily/HAD-like"/>
    <property type="match status" value="1"/>
</dbReference>
<dbReference type="InterPro" id="IPR006068">
    <property type="entry name" value="ATPase_P-typ_cation-transptr_C"/>
</dbReference>
<dbReference type="InterPro" id="IPR004014">
    <property type="entry name" value="ATPase_P-typ_cation-transptr_N"/>
</dbReference>
<dbReference type="InterPro" id="IPR023299">
    <property type="entry name" value="ATPase_P-typ_cyto_dom_N"/>
</dbReference>
<dbReference type="InterPro" id="IPR018303">
    <property type="entry name" value="ATPase_P-typ_P_site"/>
</dbReference>
<dbReference type="InterPro" id="IPR023298">
    <property type="entry name" value="ATPase_P-typ_TM_dom_sf"/>
</dbReference>
<dbReference type="InterPro" id="IPR008250">
    <property type="entry name" value="ATPase_P-typ_transduc_dom_A_sf"/>
</dbReference>
<dbReference type="InterPro" id="IPR036412">
    <property type="entry name" value="HAD-like_sf"/>
</dbReference>
<dbReference type="InterPro" id="IPR023214">
    <property type="entry name" value="HAD_sf"/>
</dbReference>
<dbReference type="InterPro" id="IPR005782">
    <property type="entry name" value="P-type_ATPase_IIA"/>
</dbReference>
<dbReference type="InterPro" id="IPR001757">
    <property type="entry name" value="P_typ_ATPase"/>
</dbReference>
<dbReference type="InterPro" id="IPR044492">
    <property type="entry name" value="P_typ_ATPase_HD_dom"/>
</dbReference>
<dbReference type="NCBIfam" id="TIGR01116">
    <property type="entry name" value="ATPase-IIA1_Ca"/>
    <property type="match status" value="1"/>
</dbReference>
<dbReference type="NCBIfam" id="TIGR01494">
    <property type="entry name" value="ATPase_P-type"/>
    <property type="match status" value="2"/>
</dbReference>
<dbReference type="PANTHER" id="PTHR42861">
    <property type="entry name" value="CALCIUM-TRANSPORTING ATPASE"/>
    <property type="match status" value="1"/>
</dbReference>
<dbReference type="Pfam" id="PF13246">
    <property type="entry name" value="Cation_ATPase"/>
    <property type="match status" value="1"/>
</dbReference>
<dbReference type="Pfam" id="PF00689">
    <property type="entry name" value="Cation_ATPase_C"/>
    <property type="match status" value="1"/>
</dbReference>
<dbReference type="Pfam" id="PF00690">
    <property type="entry name" value="Cation_ATPase_N"/>
    <property type="match status" value="1"/>
</dbReference>
<dbReference type="Pfam" id="PF00122">
    <property type="entry name" value="E1-E2_ATPase"/>
    <property type="match status" value="1"/>
</dbReference>
<dbReference type="Pfam" id="PF00702">
    <property type="entry name" value="Hydrolase"/>
    <property type="match status" value="1"/>
</dbReference>
<dbReference type="PRINTS" id="PR00119">
    <property type="entry name" value="CATATPASE"/>
</dbReference>
<dbReference type="PRINTS" id="PR00120">
    <property type="entry name" value="HATPASE"/>
</dbReference>
<dbReference type="SFLD" id="SFLDS00003">
    <property type="entry name" value="Haloacid_Dehalogenase"/>
    <property type="match status" value="1"/>
</dbReference>
<dbReference type="SFLD" id="SFLDF00027">
    <property type="entry name" value="p-type_atpase"/>
    <property type="match status" value="1"/>
</dbReference>
<dbReference type="SMART" id="SM00831">
    <property type="entry name" value="Cation_ATPase_N"/>
    <property type="match status" value="1"/>
</dbReference>
<dbReference type="SUPFAM" id="SSF81653">
    <property type="entry name" value="Calcium ATPase, transduction domain A"/>
    <property type="match status" value="1"/>
</dbReference>
<dbReference type="SUPFAM" id="SSF81665">
    <property type="entry name" value="Calcium ATPase, transmembrane domain M"/>
    <property type="match status" value="1"/>
</dbReference>
<dbReference type="SUPFAM" id="SSF56784">
    <property type="entry name" value="HAD-like"/>
    <property type="match status" value="1"/>
</dbReference>
<dbReference type="SUPFAM" id="SSF81660">
    <property type="entry name" value="Metal cation-transporting ATPase, ATP-binding domain N"/>
    <property type="match status" value="1"/>
</dbReference>
<dbReference type="PROSITE" id="PS00154">
    <property type="entry name" value="ATPASE_E1_E2"/>
    <property type="match status" value="1"/>
</dbReference>
<protein>
    <recommendedName>
        <fullName>Sarcoplasmic/endoplasmic reticulum calcium ATPase 1</fullName>
        <shortName>SERCA1</shortName>
        <shortName>SR Ca(2+)-ATPase 1</shortName>
        <ecNumber evidence="1">7.2.2.10</ecNumber>
    </recommendedName>
    <alternativeName>
        <fullName>Calcium pump 1</fullName>
    </alternativeName>
    <alternativeName>
        <fullName>Calcium-transporting ATPase sarcoplasmic reticulum type, fast twitch skeletal muscle isoform</fullName>
    </alternativeName>
    <alternativeName>
        <fullName>Endoplasmic reticulum class 1/2 Ca(2+) ATPase</fullName>
    </alternativeName>
</protein>
<evidence type="ECO:0000250" key="1">
    <source>
        <dbReference type="UniProtKB" id="P04191"/>
    </source>
</evidence>
<evidence type="ECO:0000250" key="2">
    <source>
        <dbReference type="UniProtKB" id="Q8R429"/>
    </source>
</evidence>
<evidence type="ECO:0000305" key="3"/>
<comment type="function">
    <text evidence="2">Key regulator of striated muscle performance by acting as the major Ca(2+) ATPase responsible for the reuptake of cytosolic Ca(2+) into the sarcoplasmic reticulum. Catalyzes the hydrolysis of ATP coupled with the translocation of calcium from the cytosol to the sarcoplasmic reticulum lumen. Contributes to calcium sequestration involved in muscular excitation/contraction.</text>
</comment>
<comment type="catalytic activity">
    <reaction evidence="1">
        <text>Ca(2+)(in) + ATP + H2O = Ca(2+)(out) + ADP + phosphate + H(+)</text>
        <dbReference type="Rhea" id="RHEA:18105"/>
        <dbReference type="ChEBI" id="CHEBI:15377"/>
        <dbReference type="ChEBI" id="CHEBI:15378"/>
        <dbReference type="ChEBI" id="CHEBI:29108"/>
        <dbReference type="ChEBI" id="CHEBI:30616"/>
        <dbReference type="ChEBI" id="CHEBI:43474"/>
        <dbReference type="ChEBI" id="CHEBI:456216"/>
        <dbReference type="EC" id="7.2.2.10"/>
    </reaction>
    <physiologicalReaction direction="left-to-right" evidence="1">
        <dbReference type="Rhea" id="RHEA:18106"/>
    </physiologicalReaction>
</comment>
<comment type="cofactor">
    <cofactor evidence="1">
        <name>Mg(2+)</name>
        <dbReference type="ChEBI" id="CHEBI:18420"/>
    </cofactor>
</comment>
<comment type="activity regulation">
    <text evidence="1 2">Inhibited by sarcolipin (SLN) and myoregulin (MRLN). Also shown to be inhibited by phospholamban (PLN) in vitro. Enhanced by DWORF; DWORF increases activity by displacing sarcolipin (SLN), phospholamban (PLN) and myoregulin (MRLN).</text>
</comment>
<comment type="subunit">
    <text evidence="2">Interacts with sarcolipin (SLN) (By similarity). Interacts with phospholamban (PLN) (By similarity). Interacts with myoregulin (MRLN). Interacts with DWORF (By similarity).</text>
</comment>
<comment type="subcellular location">
    <subcellularLocation>
        <location evidence="1">Endoplasmic reticulum membrane</location>
        <topology evidence="1">Multi-pass membrane protein</topology>
    </subcellularLocation>
    <subcellularLocation>
        <location evidence="1">Sarcoplasmic reticulum membrane</location>
        <topology evidence="1">Multi-pass membrane protein</topology>
    </subcellularLocation>
</comment>
<comment type="domain">
    <text evidence="1">Ca(2+) and ATP binding cause major rearrangements of the cytoplasmic and transmembrane domains. According to the E1-E2 model, Ca(2+) binding to the cytosolic domain of the pump in the high-affinity E1 conformation is followed by the ATP-dependent phosphorylation of the active site Asp, giving rise to E1P. A conformational change of the phosphoenzyme gives rise to the low-affinity E2P state that exposes the Ca(2+) ions to the lumenal side and promotes Ca(2+) release. Dephosphorylation of the active site Asp mediates the subsequent return to the E1 conformation.</text>
</comment>
<comment type="domain">
    <text evidence="1">PLN and SLN both have a single transmembrane helix; both occupy a similar binding site on ATP2A1 that is situated between the ATP2A1 transmembrane helices.</text>
</comment>
<comment type="similarity">
    <text evidence="3">Belongs to the cation transport ATPase (P-type) (TC 3.A.3) family. Type IIA subfamily.</text>
</comment>
<reference key="1">
    <citation type="journal article" date="1989" name="Mol. Cell. Biol.">
        <title>Expression of avian Ca2+-ATPase in cultured mouse myogenic cells.</title>
        <authorList>
            <person name="Karin N.J."/>
            <person name="Kaprielian Z."/>
            <person name="Fambrough D.M."/>
        </authorList>
    </citation>
    <scope>NUCLEOTIDE SEQUENCE [MRNA]</scope>
</reference>
<reference key="2">
    <citation type="submission" date="1991-01" db="EMBL/GenBank/DDBJ databases">
        <authorList>
            <person name="Karin N.J."/>
        </authorList>
    </citation>
    <scope>SEQUENCE REVISION</scope>
</reference>
<organism>
    <name type="scientific">Gallus gallus</name>
    <name type="common">Chicken</name>
    <dbReference type="NCBI Taxonomy" id="9031"/>
    <lineage>
        <taxon>Eukaryota</taxon>
        <taxon>Metazoa</taxon>
        <taxon>Chordata</taxon>
        <taxon>Craniata</taxon>
        <taxon>Vertebrata</taxon>
        <taxon>Euteleostomi</taxon>
        <taxon>Archelosauria</taxon>
        <taxon>Archosauria</taxon>
        <taxon>Dinosauria</taxon>
        <taxon>Saurischia</taxon>
        <taxon>Theropoda</taxon>
        <taxon>Coelurosauria</taxon>
        <taxon>Aves</taxon>
        <taxon>Neognathae</taxon>
        <taxon>Galloanserae</taxon>
        <taxon>Galliformes</taxon>
        <taxon>Phasianidae</taxon>
        <taxon>Phasianinae</taxon>
        <taxon>Gallus</taxon>
    </lineage>
</organism>
<gene>
    <name type="primary">ATP2A1</name>
</gene>
<sequence>MENAHAKTAEECLAFFGVNESVGLSGEQVRRALEKYGHNELPAEEGKTIWELVVEQFEDLLVRILLLAACISFVLAWFEEGEETITAFVEPFVILLILIANAVVGVWQERNAENAIEALKEYEPEMGKVYRADRKAVQRIKARDLVPGDIAEVAVGDKVPADIRIISIKSTTLRVDQSILTGESVSVIKHTEPVPDPRAVNQDKKNMLFSGTNIGAGKAVGIVVATGVNTEIGKIRDEMAATEQDKTPLQQKLDEFGEQLSKVISLICVAVWLINIGHFNDPVHGGSWIRGAIYYFKIAVALAVAAIPEGLPAVITTCLALGTRRMAKKNAIVRSLPSVETLGCTSVICSDKTGTLTTNQMSVCKMFIVDKVEGDVCSLNEFSITGSTYAPEGDVLKNEKHIKAGQHDGLVELATICALCNDSSLDYNEAKGIYEKVGEATETALTCLVEKMNVFNTDVRSLSKVERANACNSVIKQLMKKEFTLEFSRDRKSMSVYCSPAKASRAAVGNKMFVKGAPEGVIDRCNYVRVGTTRVPLTPAVKEKILAVIKEWGTGRDTLRCLALATRDTPPKMEDMMLVDSTKFAEYETDLTFVGCVGMLDPPRKEVMGSIRLCRDAGIRVIMITGDNKGTAIAICRRIGIFTEDEEVSGRAYTGREFDDLPPAEQREACRRACCFARVEPTHKSKIVEFLQSFDEITAMTGDGVNDAPALKKAEIGIAMGSGTAVAKTASEMVLADDNFSTIVAAVEEGRAIYNNMKQFIRYLISSNVGEVVCIFLTAALGLPEALIPVQLLWVNLVTDGLPATALGFNPPDLDIMDKPPRSPKEPLISGWLFFRYLAIGGYVGAATVGAAAWWFLYAEDGPSLTYHQLTHFMQCTHHNAEFEGVDCDIFESPVPMTMALSVLVTIEMCNALNSLSENQSLLRMPPWVNIWLVGSICLSMSLHFVILYVDPLPMIFKLTHLDLAHWLVVLRISFPVILLDEALKFVARNYLEA</sequence>
<feature type="chain" id="PRO_0000046191" description="Sarcoplasmic/endoplasmic reticulum calcium ATPase 1">
    <location>
        <begin position="1"/>
        <end position="994"/>
    </location>
</feature>
<feature type="topological domain" description="Cytoplasmic" evidence="3">
    <location>
        <begin position="1"/>
        <end position="48"/>
    </location>
</feature>
<feature type="transmembrane region" description="Helical; Name=1" evidence="1">
    <location>
        <begin position="49"/>
        <end position="69"/>
    </location>
</feature>
<feature type="topological domain" description="Lumenal" evidence="3">
    <location>
        <begin position="70"/>
        <end position="89"/>
    </location>
</feature>
<feature type="transmembrane region" description="Helical; Name=2" evidence="1">
    <location>
        <begin position="90"/>
        <end position="110"/>
    </location>
</feature>
<feature type="topological domain" description="Cytoplasmic" evidence="3">
    <location>
        <begin position="111"/>
        <end position="253"/>
    </location>
</feature>
<feature type="transmembrane region" description="Helical; Name=3" evidence="1">
    <location>
        <begin position="254"/>
        <end position="273"/>
    </location>
</feature>
<feature type="topological domain" description="Lumenal" evidence="3">
    <location>
        <begin position="274"/>
        <end position="295"/>
    </location>
</feature>
<feature type="transmembrane region" description="Helical; Name=4" evidence="1">
    <location>
        <begin position="296"/>
        <end position="313"/>
    </location>
</feature>
<feature type="topological domain" description="Cytoplasmic" evidence="3">
    <location>
        <begin position="314"/>
        <end position="757"/>
    </location>
</feature>
<feature type="transmembrane region" description="Helical; Name=5" evidence="1">
    <location>
        <begin position="758"/>
        <end position="777"/>
    </location>
</feature>
<feature type="topological domain" description="Lumenal" evidence="3">
    <location>
        <begin position="778"/>
        <end position="787"/>
    </location>
</feature>
<feature type="transmembrane region" description="Helical; Name=6" evidence="1">
    <location>
        <begin position="788"/>
        <end position="808"/>
    </location>
</feature>
<feature type="topological domain" description="Cytoplasmic" evidence="3">
    <location>
        <begin position="809"/>
        <end position="828"/>
    </location>
</feature>
<feature type="transmembrane region" description="Helical; Name=7" evidence="1">
    <location>
        <begin position="829"/>
        <end position="851"/>
    </location>
</feature>
<feature type="topological domain" description="Lumenal" evidence="3">
    <location>
        <begin position="852"/>
        <end position="897"/>
    </location>
</feature>
<feature type="transmembrane region" description="Helical; Name=8" evidence="1">
    <location>
        <begin position="898"/>
        <end position="917"/>
    </location>
</feature>
<feature type="topological domain" description="Cytoplasmic" evidence="3">
    <location>
        <begin position="918"/>
        <end position="930"/>
    </location>
</feature>
<feature type="transmembrane region" description="Helical; Name=9" evidence="1">
    <location>
        <begin position="931"/>
        <end position="949"/>
    </location>
</feature>
<feature type="topological domain" description="Lumenal" evidence="3">
    <location>
        <begin position="950"/>
        <end position="964"/>
    </location>
</feature>
<feature type="transmembrane region" description="Helical; Name=10" evidence="1">
    <location>
        <begin position="965"/>
        <end position="985"/>
    </location>
</feature>
<feature type="topological domain" description="Cytoplasmic" evidence="3">
    <location>
        <begin position="986"/>
        <end position="994"/>
    </location>
</feature>
<feature type="region of interest" description="Interaction with PLN" evidence="1">
    <location>
        <begin position="788"/>
        <end position="808"/>
    </location>
</feature>
<feature type="region of interest" description="Interaction with PLN" evidence="1">
    <location>
        <begin position="932"/>
        <end position="943"/>
    </location>
</feature>
<feature type="active site" description="4-aspartylphosphate intermediate" evidence="1">
    <location>
        <position position="351"/>
    </location>
</feature>
<feature type="binding site" evidence="1">
    <location>
        <position position="304"/>
    </location>
    <ligand>
        <name>Ca(2+)</name>
        <dbReference type="ChEBI" id="CHEBI:29108"/>
        <label>1</label>
    </ligand>
</feature>
<feature type="binding site" evidence="1">
    <location>
        <position position="305"/>
    </location>
    <ligand>
        <name>Ca(2+)</name>
        <dbReference type="ChEBI" id="CHEBI:29108"/>
        <label>1</label>
    </ligand>
</feature>
<feature type="binding site" evidence="1">
    <location>
        <position position="307"/>
    </location>
    <ligand>
        <name>Ca(2+)</name>
        <dbReference type="ChEBI" id="CHEBI:29108"/>
        <label>1</label>
    </ligand>
</feature>
<feature type="binding site" evidence="1">
    <location>
        <position position="309"/>
    </location>
    <ligand>
        <name>Ca(2+)</name>
        <dbReference type="ChEBI" id="CHEBI:29108"/>
        <label>1</label>
    </ligand>
</feature>
<feature type="binding site" evidence="1">
    <location>
        <position position="351"/>
    </location>
    <ligand>
        <name>Mg(2+)</name>
        <dbReference type="ChEBI" id="CHEBI:18420"/>
    </ligand>
</feature>
<feature type="binding site" evidence="1">
    <location>
        <position position="353"/>
    </location>
    <ligand>
        <name>ATP</name>
        <dbReference type="ChEBI" id="CHEBI:30616"/>
    </ligand>
</feature>
<feature type="binding site" evidence="1">
    <location>
        <position position="353"/>
    </location>
    <ligand>
        <name>Mg(2+)</name>
        <dbReference type="ChEBI" id="CHEBI:18420"/>
    </ligand>
</feature>
<feature type="binding site" evidence="1">
    <location>
        <position position="442"/>
    </location>
    <ligand>
        <name>ATP</name>
        <dbReference type="ChEBI" id="CHEBI:30616"/>
    </ligand>
</feature>
<feature type="binding site" evidence="1">
    <location>
        <position position="489"/>
    </location>
    <ligand>
        <name>ATP</name>
        <dbReference type="ChEBI" id="CHEBI:30616"/>
    </ligand>
</feature>
<feature type="binding site" evidence="1">
    <location>
        <position position="515"/>
    </location>
    <ligand>
        <name>ATP</name>
        <dbReference type="ChEBI" id="CHEBI:30616"/>
    </ligand>
</feature>
<feature type="binding site" evidence="1">
    <location>
        <position position="560"/>
    </location>
    <ligand>
        <name>ATP</name>
        <dbReference type="ChEBI" id="CHEBI:30616"/>
    </ligand>
</feature>
<feature type="binding site" evidence="1">
    <location>
        <position position="625"/>
    </location>
    <ligand>
        <name>ATP</name>
        <dbReference type="ChEBI" id="CHEBI:30616"/>
    </ligand>
</feature>
<feature type="binding site" evidence="1">
    <location>
        <position position="626"/>
    </location>
    <ligand>
        <name>ATP</name>
        <dbReference type="ChEBI" id="CHEBI:30616"/>
    </ligand>
</feature>
<feature type="binding site" evidence="1">
    <location>
        <position position="627"/>
    </location>
    <ligand>
        <name>ATP</name>
        <dbReference type="ChEBI" id="CHEBI:30616"/>
    </ligand>
</feature>
<feature type="binding site" evidence="1">
    <location>
        <position position="678"/>
    </location>
    <ligand>
        <name>ATP</name>
        <dbReference type="ChEBI" id="CHEBI:30616"/>
    </ligand>
</feature>
<feature type="binding site" evidence="1">
    <location>
        <position position="684"/>
    </location>
    <ligand>
        <name>ATP</name>
        <dbReference type="ChEBI" id="CHEBI:30616"/>
    </ligand>
</feature>
<feature type="binding site" evidence="1">
    <location>
        <position position="703"/>
    </location>
    <ligand>
        <name>Mg(2+)</name>
        <dbReference type="ChEBI" id="CHEBI:18420"/>
    </ligand>
</feature>
<feature type="binding site" evidence="1">
    <location>
        <position position="706"/>
    </location>
    <ligand>
        <name>ATP</name>
        <dbReference type="ChEBI" id="CHEBI:30616"/>
    </ligand>
</feature>
<feature type="binding site" evidence="1">
    <location>
        <position position="768"/>
    </location>
    <ligand>
        <name>Ca(2+)</name>
        <dbReference type="ChEBI" id="CHEBI:29108"/>
        <label>2</label>
    </ligand>
</feature>
<feature type="binding site" evidence="1">
    <location>
        <position position="771"/>
    </location>
    <ligand>
        <name>Ca(2+)</name>
        <dbReference type="ChEBI" id="CHEBI:29108"/>
        <label>2</label>
    </ligand>
</feature>
<feature type="binding site" evidence="1">
    <location>
        <position position="796"/>
    </location>
    <ligand>
        <name>Ca(2+)</name>
        <dbReference type="ChEBI" id="CHEBI:29108"/>
        <label>1</label>
    </ligand>
</feature>
<feature type="binding site" evidence="1">
    <location>
        <position position="799"/>
    </location>
    <ligand>
        <name>Ca(2+)</name>
        <dbReference type="ChEBI" id="CHEBI:29108"/>
        <label>2</label>
    </ligand>
</feature>
<feature type="binding site" evidence="1">
    <location>
        <position position="800"/>
    </location>
    <ligand>
        <name>Ca(2+)</name>
        <dbReference type="ChEBI" id="CHEBI:29108"/>
        <label>1</label>
    </ligand>
</feature>
<feature type="binding site" evidence="1">
    <location>
        <position position="800"/>
    </location>
    <ligand>
        <name>Ca(2+)</name>
        <dbReference type="ChEBI" id="CHEBI:29108"/>
        <label>2</label>
    </ligand>
</feature>
<feature type="binding site" evidence="1">
    <location>
        <position position="908"/>
    </location>
    <ligand>
        <name>Ca(2+)</name>
        <dbReference type="ChEBI" id="CHEBI:29108"/>
        <label>2</label>
    </ligand>
</feature>
<feature type="disulfide bond" evidence="1">
    <location>
        <begin position="876"/>
        <end position="888"/>
    </location>
</feature>
<keyword id="KW-0067">ATP-binding</keyword>
<keyword id="KW-0106">Calcium</keyword>
<keyword id="KW-0109">Calcium transport</keyword>
<keyword id="KW-1015">Disulfide bond</keyword>
<keyword id="KW-0256">Endoplasmic reticulum</keyword>
<keyword id="KW-0406">Ion transport</keyword>
<keyword id="KW-0460">Magnesium</keyword>
<keyword id="KW-0472">Membrane</keyword>
<keyword id="KW-0479">Metal-binding</keyword>
<keyword id="KW-0547">Nucleotide-binding</keyword>
<keyword id="KW-0597">Phosphoprotein</keyword>
<keyword id="KW-1185">Reference proteome</keyword>
<keyword id="KW-0703">Sarcoplasmic reticulum</keyword>
<keyword id="KW-1278">Translocase</keyword>
<keyword id="KW-0812">Transmembrane</keyword>
<keyword id="KW-1133">Transmembrane helix</keyword>
<keyword id="KW-0813">Transport</keyword>
<proteinExistence type="evidence at transcript level"/>